<accession>Q2FKB7</accession>
<keyword id="KW-0067">ATP-binding</keyword>
<keyword id="KW-1003">Cell membrane</keyword>
<keyword id="KW-0472">Membrane</keyword>
<keyword id="KW-0547">Nucleotide-binding</keyword>
<keyword id="KW-0918">Phosphonate transport</keyword>
<keyword id="KW-1278">Translocase</keyword>
<keyword id="KW-0813">Transport</keyword>
<proteinExistence type="inferred from homology"/>
<organism>
    <name type="scientific">Staphylococcus aureus (strain USA300)</name>
    <dbReference type="NCBI Taxonomy" id="367830"/>
    <lineage>
        <taxon>Bacteria</taxon>
        <taxon>Bacillati</taxon>
        <taxon>Bacillota</taxon>
        <taxon>Bacilli</taxon>
        <taxon>Bacillales</taxon>
        <taxon>Staphylococcaceae</taxon>
        <taxon>Staphylococcus</taxon>
    </lineage>
</organism>
<name>PHNC_STAA3</name>
<reference key="1">
    <citation type="journal article" date="2006" name="Lancet">
        <title>Complete genome sequence of USA300, an epidemic clone of community-acquired meticillin-resistant Staphylococcus aureus.</title>
        <authorList>
            <person name="Diep B.A."/>
            <person name="Gill S.R."/>
            <person name="Chang R.F."/>
            <person name="Phan T.H."/>
            <person name="Chen J.H."/>
            <person name="Davidson M.G."/>
            <person name="Lin F."/>
            <person name="Lin J."/>
            <person name="Carleton H.A."/>
            <person name="Mongodin E.F."/>
            <person name="Sensabaugh G.F."/>
            <person name="Perdreau-Remington F."/>
        </authorList>
    </citation>
    <scope>NUCLEOTIDE SEQUENCE [LARGE SCALE GENOMIC DNA]</scope>
    <source>
        <strain>USA300</strain>
    </source>
</reference>
<comment type="function">
    <text evidence="1">Part of the ABC transporter complex PhnCDE involved in phosphonates import. Responsible for energy coupling to the transport system.</text>
</comment>
<comment type="catalytic activity">
    <reaction evidence="1">
        <text>phosphonate(out) + ATP + H2O = phosphonate(in) + ADP + phosphate + H(+)</text>
        <dbReference type="Rhea" id="RHEA:18065"/>
        <dbReference type="ChEBI" id="CHEBI:15377"/>
        <dbReference type="ChEBI" id="CHEBI:15378"/>
        <dbReference type="ChEBI" id="CHEBI:16215"/>
        <dbReference type="ChEBI" id="CHEBI:30616"/>
        <dbReference type="ChEBI" id="CHEBI:43474"/>
        <dbReference type="ChEBI" id="CHEBI:456216"/>
        <dbReference type="EC" id="7.3.2.2"/>
    </reaction>
</comment>
<comment type="subunit">
    <text evidence="1">The complex is composed of two ATP-binding proteins (PhnC), two transmembrane proteins (PhnE) and a solute-binding protein (PhnD).</text>
</comment>
<comment type="subcellular location">
    <subcellularLocation>
        <location evidence="1">Cell membrane</location>
        <topology evidence="1">Peripheral membrane protein</topology>
    </subcellularLocation>
</comment>
<comment type="similarity">
    <text evidence="1">Belongs to the ABC transporter superfamily. Phosphonates importer (TC 3.A.1.9.1) family.</text>
</comment>
<evidence type="ECO:0000255" key="1">
    <source>
        <dbReference type="HAMAP-Rule" id="MF_01713"/>
    </source>
</evidence>
<sequence length="257" mass="28689">MSQIEFKNVSKVYPNGHVGLKNINLNIEKGEFAVIVGLSGAGKSTLLRSVNRLHDITSGEIFIQGKSITKAHGKALLEMRRNIGMIFQHFNLVKRSSVLRNVLSGRVGYHPTWKMVLGLFPKEDKIKAMDALERVNILDKYNQRSDELSGGQQQRISIARALCQESEIILADEPVASLDPLTTKQVMDDLRKINQELGITILINLHFVDLAKEYGTRIIGLRDGEVVYDGPASEATDDVFSEIYGRTIKEDEKLGVN</sequence>
<protein>
    <recommendedName>
        <fullName evidence="1">Phosphonates import ATP-binding protein PhnC</fullName>
        <ecNumber evidence="1">7.3.2.2</ecNumber>
    </recommendedName>
</protein>
<dbReference type="EC" id="7.3.2.2" evidence="1"/>
<dbReference type="EMBL" id="CP000255">
    <property type="protein sequence ID" value="ABD22009.1"/>
    <property type="molecule type" value="Genomic_DNA"/>
</dbReference>
<dbReference type="RefSeq" id="WP_000078092.1">
    <property type="nucleotide sequence ID" value="NZ_CP027476.1"/>
</dbReference>
<dbReference type="SMR" id="Q2FKB7"/>
<dbReference type="KEGG" id="saa:SAUSA300_0144"/>
<dbReference type="HOGENOM" id="CLU_000604_1_22_9"/>
<dbReference type="OMA" id="RYCPRAV"/>
<dbReference type="Proteomes" id="UP000001939">
    <property type="component" value="Chromosome"/>
</dbReference>
<dbReference type="GO" id="GO:0005886">
    <property type="term" value="C:plasma membrane"/>
    <property type="evidence" value="ECO:0007669"/>
    <property type="project" value="UniProtKB-SubCell"/>
</dbReference>
<dbReference type="GO" id="GO:0015416">
    <property type="term" value="F:ABC-type phosphonate transporter activity"/>
    <property type="evidence" value="ECO:0007669"/>
    <property type="project" value="UniProtKB-EC"/>
</dbReference>
<dbReference type="GO" id="GO:0005524">
    <property type="term" value="F:ATP binding"/>
    <property type="evidence" value="ECO:0007669"/>
    <property type="project" value="UniProtKB-KW"/>
</dbReference>
<dbReference type="GO" id="GO:0016887">
    <property type="term" value="F:ATP hydrolysis activity"/>
    <property type="evidence" value="ECO:0007669"/>
    <property type="project" value="InterPro"/>
</dbReference>
<dbReference type="CDD" id="cd03256">
    <property type="entry name" value="ABC_PhnC_transporter"/>
    <property type="match status" value="1"/>
</dbReference>
<dbReference type="Gene3D" id="3.40.50.300">
    <property type="entry name" value="P-loop containing nucleotide triphosphate hydrolases"/>
    <property type="match status" value="1"/>
</dbReference>
<dbReference type="InterPro" id="IPR003593">
    <property type="entry name" value="AAA+_ATPase"/>
</dbReference>
<dbReference type="InterPro" id="IPR003439">
    <property type="entry name" value="ABC_transporter-like_ATP-bd"/>
</dbReference>
<dbReference type="InterPro" id="IPR017871">
    <property type="entry name" value="ABC_transporter-like_CS"/>
</dbReference>
<dbReference type="InterPro" id="IPR012693">
    <property type="entry name" value="ABC_transpr_PhnC"/>
</dbReference>
<dbReference type="InterPro" id="IPR050086">
    <property type="entry name" value="MetN_ABC_transporter-like"/>
</dbReference>
<dbReference type="InterPro" id="IPR027417">
    <property type="entry name" value="P-loop_NTPase"/>
</dbReference>
<dbReference type="NCBIfam" id="TIGR02315">
    <property type="entry name" value="ABC_phnC"/>
    <property type="match status" value="1"/>
</dbReference>
<dbReference type="PANTHER" id="PTHR43166">
    <property type="entry name" value="AMINO ACID IMPORT ATP-BINDING PROTEIN"/>
    <property type="match status" value="1"/>
</dbReference>
<dbReference type="PANTHER" id="PTHR43166:SF6">
    <property type="entry name" value="PHOSPHONATES IMPORT ATP-BINDING PROTEIN PHNC"/>
    <property type="match status" value="1"/>
</dbReference>
<dbReference type="Pfam" id="PF00005">
    <property type="entry name" value="ABC_tran"/>
    <property type="match status" value="1"/>
</dbReference>
<dbReference type="SMART" id="SM00382">
    <property type="entry name" value="AAA"/>
    <property type="match status" value="1"/>
</dbReference>
<dbReference type="SUPFAM" id="SSF52540">
    <property type="entry name" value="P-loop containing nucleoside triphosphate hydrolases"/>
    <property type="match status" value="1"/>
</dbReference>
<dbReference type="PROSITE" id="PS00211">
    <property type="entry name" value="ABC_TRANSPORTER_1"/>
    <property type="match status" value="1"/>
</dbReference>
<dbReference type="PROSITE" id="PS50893">
    <property type="entry name" value="ABC_TRANSPORTER_2"/>
    <property type="match status" value="1"/>
</dbReference>
<dbReference type="PROSITE" id="PS51249">
    <property type="entry name" value="PHNC"/>
    <property type="match status" value="1"/>
</dbReference>
<gene>
    <name evidence="1" type="primary">phnC</name>
    <name type="ordered locus">SAUSA300_0144</name>
</gene>
<feature type="chain" id="PRO_0000274759" description="Phosphonates import ATP-binding protein PhnC">
    <location>
        <begin position="1"/>
        <end position="257"/>
    </location>
</feature>
<feature type="domain" description="ABC transporter" evidence="1">
    <location>
        <begin position="4"/>
        <end position="248"/>
    </location>
</feature>
<feature type="binding site" evidence="1">
    <location>
        <begin position="37"/>
        <end position="44"/>
    </location>
    <ligand>
        <name>ATP</name>
        <dbReference type="ChEBI" id="CHEBI:30616"/>
    </ligand>
</feature>